<accession>A8AK32</accession>
<organism>
    <name type="scientific">Citrobacter koseri (strain ATCC BAA-895 / CDC 4225-83 / SGSC4696)</name>
    <dbReference type="NCBI Taxonomy" id="290338"/>
    <lineage>
        <taxon>Bacteria</taxon>
        <taxon>Pseudomonadati</taxon>
        <taxon>Pseudomonadota</taxon>
        <taxon>Gammaproteobacteria</taxon>
        <taxon>Enterobacterales</taxon>
        <taxon>Enterobacteriaceae</taxon>
        <taxon>Citrobacter</taxon>
    </lineage>
</organism>
<evidence type="ECO:0000255" key="1">
    <source>
        <dbReference type="HAMAP-Rule" id="MF_00337"/>
    </source>
</evidence>
<feature type="chain" id="PRO_1000019575" description="Exodeoxyribonuclease 7 small subunit">
    <location>
        <begin position="1"/>
        <end position="80"/>
    </location>
</feature>
<dbReference type="EC" id="3.1.11.6" evidence="1"/>
<dbReference type="EMBL" id="CP000822">
    <property type="protein sequence ID" value="ABV13845.1"/>
    <property type="molecule type" value="Genomic_DNA"/>
</dbReference>
<dbReference type="RefSeq" id="WP_012133560.1">
    <property type="nucleotide sequence ID" value="NC_009792.1"/>
</dbReference>
<dbReference type="SMR" id="A8AK32"/>
<dbReference type="STRING" id="290338.CKO_02739"/>
<dbReference type="GeneID" id="45136593"/>
<dbReference type="KEGG" id="cko:CKO_02739"/>
<dbReference type="HOGENOM" id="CLU_145918_3_3_6"/>
<dbReference type="OrthoDB" id="5591562at2"/>
<dbReference type="Proteomes" id="UP000008148">
    <property type="component" value="Chromosome"/>
</dbReference>
<dbReference type="GO" id="GO:0005829">
    <property type="term" value="C:cytosol"/>
    <property type="evidence" value="ECO:0007669"/>
    <property type="project" value="TreeGrafter"/>
</dbReference>
<dbReference type="GO" id="GO:0009318">
    <property type="term" value="C:exodeoxyribonuclease VII complex"/>
    <property type="evidence" value="ECO:0007669"/>
    <property type="project" value="InterPro"/>
</dbReference>
<dbReference type="GO" id="GO:0008855">
    <property type="term" value="F:exodeoxyribonuclease VII activity"/>
    <property type="evidence" value="ECO:0007669"/>
    <property type="project" value="UniProtKB-UniRule"/>
</dbReference>
<dbReference type="GO" id="GO:0006308">
    <property type="term" value="P:DNA catabolic process"/>
    <property type="evidence" value="ECO:0007669"/>
    <property type="project" value="UniProtKB-UniRule"/>
</dbReference>
<dbReference type="FunFam" id="1.10.287.1040:FF:000001">
    <property type="entry name" value="Exodeoxyribonuclease 7 small subunit"/>
    <property type="match status" value="1"/>
</dbReference>
<dbReference type="Gene3D" id="1.10.287.1040">
    <property type="entry name" value="Exonuclease VII, small subunit"/>
    <property type="match status" value="1"/>
</dbReference>
<dbReference type="HAMAP" id="MF_00337">
    <property type="entry name" value="Exonuc_7_S"/>
    <property type="match status" value="1"/>
</dbReference>
<dbReference type="InterPro" id="IPR003761">
    <property type="entry name" value="Exonuc_VII_S"/>
</dbReference>
<dbReference type="InterPro" id="IPR037004">
    <property type="entry name" value="Exonuc_VII_ssu_sf"/>
</dbReference>
<dbReference type="NCBIfam" id="NF002137">
    <property type="entry name" value="PRK00977.1-1"/>
    <property type="match status" value="1"/>
</dbReference>
<dbReference type="NCBIfam" id="NF002140">
    <property type="entry name" value="PRK00977.1-4"/>
    <property type="match status" value="1"/>
</dbReference>
<dbReference type="NCBIfam" id="TIGR01280">
    <property type="entry name" value="xseB"/>
    <property type="match status" value="1"/>
</dbReference>
<dbReference type="PANTHER" id="PTHR34137">
    <property type="entry name" value="EXODEOXYRIBONUCLEASE 7 SMALL SUBUNIT"/>
    <property type="match status" value="1"/>
</dbReference>
<dbReference type="PANTHER" id="PTHR34137:SF1">
    <property type="entry name" value="EXODEOXYRIBONUCLEASE 7 SMALL SUBUNIT"/>
    <property type="match status" value="1"/>
</dbReference>
<dbReference type="Pfam" id="PF02609">
    <property type="entry name" value="Exonuc_VII_S"/>
    <property type="match status" value="1"/>
</dbReference>
<dbReference type="PIRSF" id="PIRSF006488">
    <property type="entry name" value="Exonuc_VII_S"/>
    <property type="match status" value="1"/>
</dbReference>
<dbReference type="SUPFAM" id="SSF116842">
    <property type="entry name" value="XseB-like"/>
    <property type="match status" value="1"/>
</dbReference>
<protein>
    <recommendedName>
        <fullName evidence="1">Exodeoxyribonuclease 7 small subunit</fullName>
        <ecNumber evidence="1">3.1.11.6</ecNumber>
    </recommendedName>
    <alternativeName>
        <fullName evidence="1">Exodeoxyribonuclease VII small subunit</fullName>
        <shortName evidence="1">Exonuclease VII small subunit</shortName>
    </alternativeName>
</protein>
<comment type="function">
    <text evidence="1">Bidirectionally degrades single-stranded DNA into large acid-insoluble oligonucleotides, which are then degraded further into small acid-soluble oligonucleotides.</text>
</comment>
<comment type="catalytic activity">
    <reaction evidence="1">
        <text>Exonucleolytic cleavage in either 5'- to 3'- or 3'- to 5'-direction to yield nucleoside 5'-phosphates.</text>
        <dbReference type="EC" id="3.1.11.6"/>
    </reaction>
</comment>
<comment type="subunit">
    <text evidence="1">Heterooligomer composed of large and small subunits.</text>
</comment>
<comment type="subcellular location">
    <subcellularLocation>
        <location evidence="1">Cytoplasm</location>
    </subcellularLocation>
</comment>
<comment type="similarity">
    <text evidence="1">Belongs to the XseB family.</text>
</comment>
<keyword id="KW-0963">Cytoplasm</keyword>
<keyword id="KW-0269">Exonuclease</keyword>
<keyword id="KW-0378">Hydrolase</keyword>
<keyword id="KW-0540">Nuclease</keyword>
<keyword id="KW-1185">Reference proteome</keyword>
<sequence>MPKKNEAPASFETALSELEQIVTRLESGDLPLEEALNEFERGVQLARQGQAKLQQAEQRVQILLSDNEDASPEPFTPDNE</sequence>
<name>EX7S_CITK8</name>
<gene>
    <name evidence="1" type="primary">xseB</name>
    <name type="ordered locus">CKO_02739</name>
</gene>
<reference key="1">
    <citation type="submission" date="2007-08" db="EMBL/GenBank/DDBJ databases">
        <authorList>
            <consortium name="The Citrobacter koseri Genome Sequencing Project"/>
            <person name="McClelland M."/>
            <person name="Sanderson E.K."/>
            <person name="Porwollik S."/>
            <person name="Spieth J."/>
            <person name="Clifton W.S."/>
            <person name="Latreille P."/>
            <person name="Courtney L."/>
            <person name="Wang C."/>
            <person name="Pepin K."/>
            <person name="Bhonagiri V."/>
            <person name="Nash W."/>
            <person name="Johnson M."/>
            <person name="Thiruvilangam P."/>
            <person name="Wilson R."/>
        </authorList>
    </citation>
    <scope>NUCLEOTIDE SEQUENCE [LARGE SCALE GENOMIC DNA]</scope>
    <source>
        <strain>ATCC BAA-895 / CDC 4225-83 / SGSC4696</strain>
    </source>
</reference>
<proteinExistence type="inferred from homology"/>